<comment type="function">
    <text evidence="1">Displays ATPase and GTPase activities.</text>
</comment>
<comment type="similarity">
    <text evidence="1">Belongs to the RapZ-like family.</text>
</comment>
<accession>B4SMH8</accession>
<keyword id="KW-0067">ATP-binding</keyword>
<keyword id="KW-0342">GTP-binding</keyword>
<keyword id="KW-0547">Nucleotide-binding</keyword>
<reference key="1">
    <citation type="submission" date="2008-06" db="EMBL/GenBank/DDBJ databases">
        <title>Complete sequence of Stenotrophomonas maltophilia R551-3.</title>
        <authorList>
            <consortium name="US DOE Joint Genome Institute"/>
            <person name="Lucas S."/>
            <person name="Copeland A."/>
            <person name="Lapidus A."/>
            <person name="Glavina del Rio T."/>
            <person name="Dalin E."/>
            <person name="Tice H."/>
            <person name="Pitluck S."/>
            <person name="Chain P."/>
            <person name="Malfatti S."/>
            <person name="Shin M."/>
            <person name="Vergez L."/>
            <person name="Lang D."/>
            <person name="Schmutz J."/>
            <person name="Larimer F."/>
            <person name="Land M."/>
            <person name="Hauser L."/>
            <person name="Kyrpides N."/>
            <person name="Mikhailova N."/>
            <person name="Taghavi S."/>
            <person name="Monchy S."/>
            <person name="Newman L."/>
            <person name="Vangronsveld J."/>
            <person name="van der Lelie D."/>
            <person name="Richardson P."/>
        </authorList>
    </citation>
    <scope>NUCLEOTIDE SEQUENCE [LARGE SCALE GENOMIC DNA]</scope>
    <source>
        <strain>R551-3</strain>
    </source>
</reference>
<feature type="chain" id="PRO_0000383293" description="Nucleotide-binding protein Smal_0950">
    <location>
        <begin position="1"/>
        <end position="294"/>
    </location>
</feature>
<feature type="binding site" evidence="1">
    <location>
        <begin position="16"/>
        <end position="23"/>
    </location>
    <ligand>
        <name>ATP</name>
        <dbReference type="ChEBI" id="CHEBI:30616"/>
    </ligand>
</feature>
<feature type="binding site" evidence="1">
    <location>
        <begin position="69"/>
        <end position="72"/>
    </location>
    <ligand>
        <name>GTP</name>
        <dbReference type="ChEBI" id="CHEBI:37565"/>
    </ligand>
</feature>
<proteinExistence type="inferred from homology"/>
<evidence type="ECO:0000255" key="1">
    <source>
        <dbReference type="HAMAP-Rule" id="MF_00636"/>
    </source>
</evidence>
<protein>
    <recommendedName>
        <fullName evidence="1">Nucleotide-binding protein Smal_0950</fullName>
    </recommendedName>
</protein>
<dbReference type="EMBL" id="CP001111">
    <property type="protein sequence ID" value="ACF50655.1"/>
    <property type="molecule type" value="Genomic_DNA"/>
</dbReference>
<dbReference type="RefSeq" id="WP_012510283.1">
    <property type="nucleotide sequence ID" value="NC_011071.1"/>
</dbReference>
<dbReference type="SMR" id="B4SMH8"/>
<dbReference type="STRING" id="391008.Smal_0950"/>
<dbReference type="KEGG" id="smt:Smal_0950"/>
<dbReference type="eggNOG" id="COG1660">
    <property type="taxonomic scope" value="Bacteria"/>
</dbReference>
<dbReference type="HOGENOM" id="CLU_059558_1_1_6"/>
<dbReference type="OrthoDB" id="9784461at2"/>
<dbReference type="Proteomes" id="UP000001867">
    <property type="component" value="Chromosome"/>
</dbReference>
<dbReference type="GO" id="GO:0005524">
    <property type="term" value="F:ATP binding"/>
    <property type="evidence" value="ECO:0007669"/>
    <property type="project" value="UniProtKB-UniRule"/>
</dbReference>
<dbReference type="GO" id="GO:0005525">
    <property type="term" value="F:GTP binding"/>
    <property type="evidence" value="ECO:0007669"/>
    <property type="project" value="UniProtKB-UniRule"/>
</dbReference>
<dbReference type="Gene3D" id="3.40.50.300">
    <property type="entry name" value="P-loop containing nucleotide triphosphate hydrolases"/>
    <property type="match status" value="1"/>
</dbReference>
<dbReference type="HAMAP" id="MF_00636">
    <property type="entry name" value="RapZ_like"/>
    <property type="match status" value="1"/>
</dbReference>
<dbReference type="InterPro" id="IPR027417">
    <property type="entry name" value="P-loop_NTPase"/>
</dbReference>
<dbReference type="InterPro" id="IPR005337">
    <property type="entry name" value="RapZ-like"/>
</dbReference>
<dbReference type="InterPro" id="IPR053930">
    <property type="entry name" value="RapZ-like_N"/>
</dbReference>
<dbReference type="InterPro" id="IPR053931">
    <property type="entry name" value="RapZ_C"/>
</dbReference>
<dbReference type="NCBIfam" id="NF003828">
    <property type="entry name" value="PRK05416.1"/>
    <property type="match status" value="1"/>
</dbReference>
<dbReference type="PANTHER" id="PTHR30448">
    <property type="entry name" value="RNASE ADAPTER PROTEIN RAPZ"/>
    <property type="match status" value="1"/>
</dbReference>
<dbReference type="PANTHER" id="PTHR30448:SF0">
    <property type="entry name" value="RNASE ADAPTER PROTEIN RAPZ"/>
    <property type="match status" value="1"/>
</dbReference>
<dbReference type="Pfam" id="PF22740">
    <property type="entry name" value="PapZ_C"/>
    <property type="match status" value="1"/>
</dbReference>
<dbReference type="Pfam" id="PF03668">
    <property type="entry name" value="RapZ-like_N"/>
    <property type="match status" value="1"/>
</dbReference>
<dbReference type="PIRSF" id="PIRSF005052">
    <property type="entry name" value="P-loopkin"/>
    <property type="match status" value="1"/>
</dbReference>
<dbReference type="SUPFAM" id="SSF52540">
    <property type="entry name" value="P-loop containing nucleoside triphosphate hydrolases"/>
    <property type="match status" value="1"/>
</dbReference>
<organism>
    <name type="scientific">Stenotrophomonas maltophilia (strain R551-3)</name>
    <dbReference type="NCBI Taxonomy" id="391008"/>
    <lineage>
        <taxon>Bacteria</taxon>
        <taxon>Pseudomonadati</taxon>
        <taxon>Pseudomonadota</taxon>
        <taxon>Gammaproteobacteria</taxon>
        <taxon>Lysobacterales</taxon>
        <taxon>Lysobacteraceae</taxon>
        <taxon>Stenotrophomonas</taxon>
        <taxon>Stenotrophomonas maltophilia group</taxon>
    </lineage>
</organism>
<gene>
    <name type="ordered locus">Smal_0950</name>
</gene>
<name>Y950_STRM5</name>
<sequence length="294" mass="32896">MSTAPPSAPTLIIVSGLSGSGKSVALKTFEDQDYYCSDNLPINLLPDFVRSLLANHDGSAPRRLAVGIDVRGQSNLSQLGNWRQLATDAGVEVEVLFFEASDEAVLKRYADTRRRHPLSQLGLSLPEAIARERELTAPLRREADAVIDTSTLNVHQLRRRIITEFALDHATRLSLLFESFAYKRGVPAEADFVFDARVLPNPHWDPDLRALSGREPGVRDYLEAQPDVQHYLAQLTDFLDTWLPKLGDGTRSYVTVAFGCTGGKHRSVFLAERMARHAREMGWEDVATYHREQD</sequence>